<dbReference type="EMBL" id="BT025415">
    <property type="protein sequence ID" value="ABF57371.1"/>
    <property type="molecule type" value="mRNA"/>
</dbReference>
<dbReference type="EMBL" id="BC111223">
    <property type="protein sequence ID" value="AAI11224.1"/>
    <property type="molecule type" value="mRNA"/>
</dbReference>
<dbReference type="RefSeq" id="NP_001033215.1">
    <property type="nucleotide sequence ID" value="NM_001038126.1"/>
</dbReference>
<dbReference type="FunCoup" id="Q1JPD8">
    <property type="interactions" value="208"/>
</dbReference>
<dbReference type="STRING" id="9913.ENSBTAP00000061819"/>
<dbReference type="GlyCosmos" id="Q1JPD8">
    <property type="glycosylation" value="1 site, No reported glycans"/>
</dbReference>
<dbReference type="GlyGen" id="Q1JPD8">
    <property type="glycosylation" value="1 site"/>
</dbReference>
<dbReference type="PaxDb" id="9913-ENSBTAP00000013267"/>
<dbReference type="GeneID" id="516840"/>
<dbReference type="KEGG" id="bta:516840"/>
<dbReference type="CTD" id="29015"/>
<dbReference type="eggNOG" id="ENOG502QRYG">
    <property type="taxonomic scope" value="Eukaryota"/>
</dbReference>
<dbReference type="HOGENOM" id="CLU_035676_1_1_1"/>
<dbReference type="InParanoid" id="Q1JPD8"/>
<dbReference type="OrthoDB" id="330047at2759"/>
<dbReference type="TreeFam" id="TF328358"/>
<dbReference type="Proteomes" id="UP000009136">
    <property type="component" value="Unplaced"/>
</dbReference>
<dbReference type="GO" id="GO:0016323">
    <property type="term" value="C:basolateral plasma membrane"/>
    <property type="evidence" value="ECO:0000250"/>
    <property type="project" value="UniProtKB"/>
</dbReference>
<dbReference type="GO" id="GO:0015207">
    <property type="term" value="F:adenine transmembrane transporter activity"/>
    <property type="evidence" value="ECO:0000250"/>
    <property type="project" value="UniProtKB"/>
</dbReference>
<dbReference type="GO" id="GO:0015245">
    <property type="term" value="F:fatty acid transmembrane transporter activity"/>
    <property type="evidence" value="ECO:0000250"/>
    <property type="project" value="UniProtKB"/>
</dbReference>
<dbReference type="GO" id="GO:0015208">
    <property type="term" value="F:guanine transmembrane transporter activity"/>
    <property type="evidence" value="ECO:0000250"/>
    <property type="project" value="UniProtKB"/>
</dbReference>
<dbReference type="GO" id="GO:0042910">
    <property type="term" value="F:xenobiotic transmembrane transporter activity"/>
    <property type="evidence" value="ECO:0000250"/>
    <property type="project" value="UniProtKB"/>
</dbReference>
<dbReference type="GO" id="GO:0035344">
    <property type="term" value="P:hypoxanthine transport"/>
    <property type="evidence" value="ECO:0000250"/>
    <property type="project" value="UniProtKB"/>
</dbReference>
<dbReference type="Gene3D" id="1.20.1250.20">
    <property type="entry name" value="MFS general substrate transporter like domains"/>
    <property type="match status" value="2"/>
</dbReference>
<dbReference type="InterPro" id="IPR011701">
    <property type="entry name" value="MFS"/>
</dbReference>
<dbReference type="InterPro" id="IPR036259">
    <property type="entry name" value="MFS_trans_sf"/>
</dbReference>
<dbReference type="InterPro" id="IPR027197">
    <property type="entry name" value="SLC43A3"/>
</dbReference>
<dbReference type="PANTHER" id="PTHR20765:SF1">
    <property type="entry name" value="EQUILIBRATIVE NUCLEOBASE TRANSPORTER 1"/>
    <property type="match status" value="1"/>
</dbReference>
<dbReference type="PANTHER" id="PTHR20765">
    <property type="entry name" value="SOLUTE CARRIER FAMILY 43 MEMBER 3-RELATED"/>
    <property type="match status" value="1"/>
</dbReference>
<dbReference type="Pfam" id="PF07690">
    <property type="entry name" value="MFS_1"/>
    <property type="match status" value="1"/>
</dbReference>
<dbReference type="SUPFAM" id="SSF103473">
    <property type="entry name" value="MFS general substrate transporter"/>
    <property type="match status" value="1"/>
</dbReference>
<sequence>MQGRSLPFRVATLVTGLLECLGFAGVLFGWTSLVFVFKKQHYFEELCELDAGSLGNATGLDECRARDERFSLIFTLASFTINFMTFPTGYIFDRFKTTVARLIAIFLYTSATLTIAFTSADSAVLLFLAMPMLAVGGILFLITNLQIGNLFGKHRSTIITMYNGAFDSSSAVFLIIKLLYEQGVTIKASFLFISVCSAWHVGRTLLLMPRGHIPYPLPANYHYGLCSRDSPPEEDKKEAESEKLELQSKEFLSPKKETPGQQQAPGSFWSHTFSPRFAWHVVWLSVIQLWHYLFIGTLNSLLNNLASRDSAIVSTYTNAFAVTQFFGVLCAPWNGLLMDRLKHKYQEEAKRTGAVAKAAALRSVVPSLTLTSLLSLGFAVCASIPVLPLQYATFILQVVSRSFLYGCNAAFLTLAFPSEHFGKLFGLVMALSAVVSLLQFPLFTLIKGPLQNDPLYVNLMLVLLTLLTFIHPFLVNRECQRKESPREVA</sequence>
<protein>
    <recommendedName>
        <fullName evidence="2">Equilibrative nucleobase transporter 1</fullName>
    </recommendedName>
    <alternativeName>
        <fullName>Solute carrier family 43 member 3</fullName>
    </alternativeName>
</protein>
<accession>Q1JPD8</accession>
<accession>Q2T9X4</accession>
<gene>
    <name type="primary">SLC43A3</name>
    <name evidence="2" type="synonym">ENBT1</name>
</gene>
<name>S43A3_BOVIN</name>
<comment type="function">
    <text evidence="1 2">Sodium-independent purine-selective nucleobase transporter which mediates the equilibrative transport of extracellular purine nucleobases such as adenine, guanine and hypoxanthine (By similarity). May regulate fatty acid (FA) transport in adipocytes, acting as a positive regulator of FA efflux and as a negative regulator of FA uptake (By similarity).</text>
</comment>
<comment type="catalytic activity">
    <reaction evidence="2">
        <text>adenine(out) = adenine(in)</text>
        <dbReference type="Rhea" id="RHEA:71523"/>
        <dbReference type="ChEBI" id="CHEBI:16708"/>
    </reaction>
    <physiologicalReaction direction="left-to-right" evidence="2">
        <dbReference type="Rhea" id="RHEA:71524"/>
    </physiologicalReaction>
</comment>
<comment type="catalytic activity">
    <reaction evidence="2">
        <text>guanine(out) = guanine(in)</text>
        <dbReference type="Rhea" id="RHEA:71531"/>
        <dbReference type="ChEBI" id="CHEBI:16235"/>
    </reaction>
    <physiologicalReaction direction="left-to-right" evidence="2">
        <dbReference type="Rhea" id="RHEA:71532"/>
    </physiologicalReaction>
</comment>
<comment type="catalytic activity">
    <reaction evidence="2">
        <text>hypoxanthine(out) = hypoxanthine(in)</text>
        <dbReference type="Rhea" id="RHEA:71515"/>
        <dbReference type="ChEBI" id="CHEBI:17368"/>
    </reaction>
    <physiologicalReaction direction="left-to-right" evidence="2">
        <dbReference type="Rhea" id="RHEA:71516"/>
    </physiologicalReaction>
</comment>
<comment type="subcellular location">
    <subcellularLocation>
        <location evidence="2">Basolateral cell membrane</location>
        <topology evidence="3">Multi-pass membrane protein</topology>
    </subcellularLocation>
</comment>
<comment type="similarity">
    <text evidence="4">Belongs to the SLC43A transporter (TC 2.A.1.44) family.</text>
</comment>
<proteinExistence type="evidence at transcript level"/>
<reference key="1">
    <citation type="journal article" date="2005" name="BMC Genomics">
        <title>Characterization of 954 bovine full-CDS cDNA sequences.</title>
        <authorList>
            <person name="Harhay G.P."/>
            <person name="Sonstegard T.S."/>
            <person name="Keele J.W."/>
            <person name="Heaton M.P."/>
            <person name="Clawson M.L."/>
            <person name="Snelling W.M."/>
            <person name="Wiedmann R.T."/>
            <person name="Van Tassell C.P."/>
            <person name="Smith T.P.L."/>
        </authorList>
    </citation>
    <scope>NUCLEOTIDE SEQUENCE [LARGE SCALE MRNA]</scope>
</reference>
<reference key="2">
    <citation type="submission" date="2005-12" db="EMBL/GenBank/DDBJ databases">
        <authorList>
            <consortium name="NIH - Mammalian Gene Collection (MGC) project"/>
        </authorList>
    </citation>
    <scope>NUCLEOTIDE SEQUENCE [LARGE SCALE MRNA]</scope>
    <source>
        <strain>Crossbred X Angus</strain>
        <tissue>Liver</tissue>
    </source>
</reference>
<evidence type="ECO:0000250" key="1">
    <source>
        <dbReference type="UniProtKB" id="A2AVZ9"/>
    </source>
</evidence>
<evidence type="ECO:0000250" key="2">
    <source>
        <dbReference type="UniProtKB" id="Q8NBI5"/>
    </source>
</evidence>
<evidence type="ECO:0000255" key="3"/>
<evidence type="ECO:0000305" key="4"/>
<keyword id="KW-1003">Cell membrane</keyword>
<keyword id="KW-0325">Glycoprotein</keyword>
<keyword id="KW-0445">Lipid transport</keyword>
<keyword id="KW-0472">Membrane</keyword>
<keyword id="KW-0597">Phosphoprotein</keyword>
<keyword id="KW-1185">Reference proteome</keyword>
<keyword id="KW-0812">Transmembrane</keyword>
<keyword id="KW-1133">Transmembrane helix</keyword>
<keyword id="KW-0813">Transport</keyword>
<feature type="chain" id="PRO_0000305035" description="Equilibrative nucleobase transporter 1">
    <location>
        <begin position="1"/>
        <end position="489"/>
    </location>
</feature>
<feature type="transmembrane region" description="Helical" evidence="3">
    <location>
        <begin position="17"/>
        <end position="37"/>
    </location>
</feature>
<feature type="transmembrane region" description="Helical" evidence="3">
    <location>
        <begin position="72"/>
        <end position="92"/>
    </location>
</feature>
<feature type="transmembrane region" description="Helical" evidence="3">
    <location>
        <begin position="102"/>
        <end position="122"/>
    </location>
</feature>
<feature type="transmembrane region" description="Helical" evidence="3">
    <location>
        <begin position="123"/>
        <end position="143"/>
    </location>
</feature>
<feature type="transmembrane region" description="Helical" evidence="3">
    <location>
        <begin position="158"/>
        <end position="180"/>
    </location>
</feature>
<feature type="transmembrane region" description="Helical" evidence="3">
    <location>
        <begin position="277"/>
        <end position="297"/>
    </location>
</feature>
<feature type="transmembrane region" description="Helical" evidence="3">
    <location>
        <begin position="318"/>
        <end position="338"/>
    </location>
</feature>
<feature type="transmembrane region" description="Helical" evidence="3">
    <location>
        <begin position="358"/>
        <end position="380"/>
    </location>
</feature>
<feature type="transmembrane region" description="Helical" evidence="3">
    <location>
        <begin position="402"/>
        <end position="422"/>
    </location>
</feature>
<feature type="transmembrane region" description="Helical" evidence="3">
    <location>
        <begin position="426"/>
        <end position="446"/>
    </location>
</feature>
<feature type="transmembrane region" description="Helical" evidence="3">
    <location>
        <begin position="455"/>
        <end position="475"/>
    </location>
</feature>
<feature type="modified residue" description="Phosphoserine" evidence="2">
    <location>
        <position position="253"/>
    </location>
</feature>
<feature type="modified residue" description="Phosphothreonine" evidence="2">
    <location>
        <position position="258"/>
    </location>
</feature>
<feature type="glycosylation site" description="N-linked (GlcNAc...) asparagine" evidence="3">
    <location>
        <position position="56"/>
    </location>
</feature>
<feature type="sequence conflict" description="In Ref. 2; AAI11224." evidence="4" ref="2">
    <original>H</original>
    <variation>R</variation>
    <location>
        <position position="222"/>
    </location>
</feature>
<feature type="sequence conflict" description="In Ref. 2; AAI11224." evidence="4" ref="2">
    <original>E</original>
    <variation>G</variation>
    <location>
        <position position="240"/>
    </location>
</feature>
<feature type="sequence conflict" description="In Ref. 2; AAI11224." evidence="4" ref="2">
    <original>L</original>
    <variation>P</variation>
    <location>
        <position position="252"/>
    </location>
</feature>
<feature type="sequence conflict" description="In Ref. 2; AAI11224." evidence="4" ref="2">
    <original>R</original>
    <variation>S</variation>
    <location>
        <position position="308"/>
    </location>
</feature>
<organism>
    <name type="scientific">Bos taurus</name>
    <name type="common">Bovine</name>
    <dbReference type="NCBI Taxonomy" id="9913"/>
    <lineage>
        <taxon>Eukaryota</taxon>
        <taxon>Metazoa</taxon>
        <taxon>Chordata</taxon>
        <taxon>Craniata</taxon>
        <taxon>Vertebrata</taxon>
        <taxon>Euteleostomi</taxon>
        <taxon>Mammalia</taxon>
        <taxon>Eutheria</taxon>
        <taxon>Laurasiatheria</taxon>
        <taxon>Artiodactyla</taxon>
        <taxon>Ruminantia</taxon>
        <taxon>Pecora</taxon>
        <taxon>Bovidae</taxon>
        <taxon>Bovinae</taxon>
        <taxon>Bos</taxon>
    </lineage>
</organism>